<name>RL29_VIBVY</name>
<evidence type="ECO:0000255" key="1">
    <source>
        <dbReference type="HAMAP-Rule" id="MF_00374"/>
    </source>
</evidence>
<evidence type="ECO:0000305" key="2"/>
<feature type="chain" id="PRO_0000130495" description="Large ribosomal subunit protein uL29">
    <location>
        <begin position="1"/>
        <end position="63"/>
    </location>
</feature>
<reference key="1">
    <citation type="journal article" date="2003" name="Genome Res.">
        <title>Comparative genome analysis of Vibrio vulnificus, a marine pathogen.</title>
        <authorList>
            <person name="Chen C.-Y."/>
            <person name="Wu K.-M."/>
            <person name="Chang Y.-C."/>
            <person name="Chang C.-H."/>
            <person name="Tsai H.-C."/>
            <person name="Liao T.-L."/>
            <person name="Liu Y.-M."/>
            <person name="Chen H.-J."/>
            <person name="Shen A.B.-T."/>
            <person name="Li J.-C."/>
            <person name="Su T.-L."/>
            <person name="Shao C.-P."/>
            <person name="Lee C.-T."/>
            <person name="Hor L.-I."/>
            <person name="Tsai S.-F."/>
        </authorList>
    </citation>
    <scope>NUCLEOTIDE SEQUENCE [LARGE SCALE GENOMIC DNA]</scope>
    <source>
        <strain>YJ016</strain>
    </source>
</reference>
<proteinExistence type="inferred from homology"/>
<organism>
    <name type="scientific">Vibrio vulnificus (strain YJ016)</name>
    <dbReference type="NCBI Taxonomy" id="196600"/>
    <lineage>
        <taxon>Bacteria</taxon>
        <taxon>Pseudomonadati</taxon>
        <taxon>Pseudomonadota</taxon>
        <taxon>Gammaproteobacteria</taxon>
        <taxon>Vibrionales</taxon>
        <taxon>Vibrionaceae</taxon>
        <taxon>Vibrio</taxon>
    </lineage>
</organism>
<keyword id="KW-0687">Ribonucleoprotein</keyword>
<keyword id="KW-0689">Ribosomal protein</keyword>
<comment type="similarity">
    <text evidence="1">Belongs to the universal ribosomal protein uL29 family.</text>
</comment>
<comment type="sequence caution" evidence="2">
    <conflict type="erroneous initiation">
        <sequence resource="EMBL-CDS" id="BAC93147"/>
    </conflict>
</comment>
<protein>
    <recommendedName>
        <fullName evidence="1">Large ribosomal subunit protein uL29</fullName>
    </recommendedName>
    <alternativeName>
        <fullName evidence="2">50S ribosomal protein L29</fullName>
    </alternativeName>
</protein>
<gene>
    <name evidence="1" type="primary">rpmC</name>
    <name type="ordered locus">VV0383</name>
</gene>
<accession>Q7MPI0</accession>
<dbReference type="EMBL" id="BA000037">
    <property type="protein sequence ID" value="BAC93147.1"/>
    <property type="status" value="ALT_INIT"/>
    <property type="molecule type" value="Genomic_DNA"/>
</dbReference>
<dbReference type="RefSeq" id="WP_011078825.1">
    <property type="nucleotide sequence ID" value="NC_005139.1"/>
</dbReference>
<dbReference type="SMR" id="Q7MPI0"/>
<dbReference type="STRING" id="672.VV93_v1c03540"/>
<dbReference type="GeneID" id="93895058"/>
<dbReference type="KEGG" id="vvy:VV0383"/>
<dbReference type="eggNOG" id="COG0255">
    <property type="taxonomic scope" value="Bacteria"/>
</dbReference>
<dbReference type="HOGENOM" id="CLU_158491_1_2_6"/>
<dbReference type="Proteomes" id="UP000002675">
    <property type="component" value="Chromosome I"/>
</dbReference>
<dbReference type="GO" id="GO:0022625">
    <property type="term" value="C:cytosolic large ribosomal subunit"/>
    <property type="evidence" value="ECO:0007669"/>
    <property type="project" value="TreeGrafter"/>
</dbReference>
<dbReference type="GO" id="GO:0003735">
    <property type="term" value="F:structural constituent of ribosome"/>
    <property type="evidence" value="ECO:0007669"/>
    <property type="project" value="InterPro"/>
</dbReference>
<dbReference type="GO" id="GO:0006412">
    <property type="term" value="P:translation"/>
    <property type="evidence" value="ECO:0007669"/>
    <property type="project" value="UniProtKB-UniRule"/>
</dbReference>
<dbReference type="CDD" id="cd00427">
    <property type="entry name" value="Ribosomal_L29_HIP"/>
    <property type="match status" value="1"/>
</dbReference>
<dbReference type="FunFam" id="1.10.287.310:FF:000001">
    <property type="entry name" value="50S ribosomal protein L29"/>
    <property type="match status" value="1"/>
</dbReference>
<dbReference type="Gene3D" id="1.10.287.310">
    <property type="match status" value="1"/>
</dbReference>
<dbReference type="HAMAP" id="MF_00374">
    <property type="entry name" value="Ribosomal_uL29"/>
    <property type="match status" value="1"/>
</dbReference>
<dbReference type="InterPro" id="IPR050063">
    <property type="entry name" value="Ribosomal_protein_uL29"/>
</dbReference>
<dbReference type="InterPro" id="IPR001854">
    <property type="entry name" value="Ribosomal_uL29"/>
</dbReference>
<dbReference type="InterPro" id="IPR018254">
    <property type="entry name" value="Ribosomal_uL29_CS"/>
</dbReference>
<dbReference type="InterPro" id="IPR036049">
    <property type="entry name" value="Ribosomal_uL29_sf"/>
</dbReference>
<dbReference type="NCBIfam" id="TIGR00012">
    <property type="entry name" value="L29"/>
    <property type="match status" value="1"/>
</dbReference>
<dbReference type="PANTHER" id="PTHR10916">
    <property type="entry name" value="60S RIBOSOMAL PROTEIN L35/50S RIBOSOMAL PROTEIN L29"/>
    <property type="match status" value="1"/>
</dbReference>
<dbReference type="PANTHER" id="PTHR10916:SF0">
    <property type="entry name" value="LARGE RIBOSOMAL SUBUNIT PROTEIN UL29C"/>
    <property type="match status" value="1"/>
</dbReference>
<dbReference type="Pfam" id="PF00831">
    <property type="entry name" value="Ribosomal_L29"/>
    <property type="match status" value="1"/>
</dbReference>
<dbReference type="SUPFAM" id="SSF46561">
    <property type="entry name" value="Ribosomal protein L29 (L29p)"/>
    <property type="match status" value="1"/>
</dbReference>
<dbReference type="PROSITE" id="PS00579">
    <property type="entry name" value="RIBOSOMAL_L29"/>
    <property type="match status" value="1"/>
</dbReference>
<sequence>MKAQDLREKSVEELNSELLNLLREQFNLRMQAATGQLQQTHTLKAVRRDIARVKTVLTEKAGA</sequence>